<feature type="chain" id="PRO_0000228699" description="Probable phosphatase YcdX">
    <location>
        <begin position="1"/>
        <end position="245"/>
    </location>
</feature>
<feature type="binding site" evidence="1">
    <location>
        <position position="7"/>
    </location>
    <ligand>
        <name>Zn(2+)</name>
        <dbReference type="ChEBI" id="CHEBI:29105"/>
        <label>1</label>
    </ligand>
</feature>
<feature type="binding site" evidence="1">
    <location>
        <position position="9"/>
    </location>
    <ligand>
        <name>Zn(2+)</name>
        <dbReference type="ChEBI" id="CHEBI:29105"/>
        <label>1</label>
    </ligand>
</feature>
<feature type="binding site" evidence="1">
    <location>
        <position position="15"/>
    </location>
    <ligand>
        <name>Zn(2+)</name>
        <dbReference type="ChEBI" id="CHEBI:29105"/>
        <label>2</label>
    </ligand>
</feature>
<feature type="binding site" evidence="1">
    <location>
        <position position="40"/>
    </location>
    <ligand>
        <name>Zn(2+)</name>
        <dbReference type="ChEBI" id="CHEBI:29105"/>
        <label>2</label>
    </ligand>
</feature>
<feature type="binding site" evidence="1">
    <location>
        <position position="73"/>
    </location>
    <ligand>
        <name>Zn(2+)</name>
        <dbReference type="ChEBI" id="CHEBI:29105"/>
        <label>1</label>
    </ligand>
</feature>
<feature type="binding site" evidence="1">
    <location>
        <position position="73"/>
    </location>
    <ligand>
        <name>Zn(2+)</name>
        <dbReference type="ChEBI" id="CHEBI:29105"/>
        <label>3</label>
    </ligand>
</feature>
<feature type="binding site" evidence="1">
    <location>
        <position position="101"/>
    </location>
    <ligand>
        <name>Zn(2+)</name>
        <dbReference type="ChEBI" id="CHEBI:29105"/>
        <label>3</label>
    </ligand>
</feature>
<feature type="binding site" evidence="1">
    <location>
        <position position="131"/>
    </location>
    <ligand>
        <name>Zn(2+)</name>
        <dbReference type="ChEBI" id="CHEBI:29105"/>
        <label>3</label>
    </ligand>
</feature>
<feature type="binding site" evidence="1">
    <location>
        <position position="192"/>
    </location>
    <ligand>
        <name>Zn(2+)</name>
        <dbReference type="ChEBI" id="CHEBI:29105"/>
        <label>1</label>
    </ligand>
</feature>
<feature type="binding site" evidence="1">
    <location>
        <position position="194"/>
    </location>
    <ligand>
        <name>Zn(2+)</name>
        <dbReference type="ChEBI" id="CHEBI:29105"/>
        <label>2</label>
    </ligand>
</feature>
<name>YCDX_SALTY</name>
<keyword id="KW-0378">Hydrolase</keyword>
<keyword id="KW-0479">Metal-binding</keyword>
<keyword id="KW-1185">Reference proteome</keyword>
<keyword id="KW-0862">Zinc</keyword>
<gene>
    <name evidence="1" type="primary">ycdX</name>
    <name type="ordered locus">STM1136</name>
</gene>
<evidence type="ECO:0000255" key="1">
    <source>
        <dbReference type="HAMAP-Rule" id="MF_01561"/>
    </source>
</evidence>
<comment type="cofactor">
    <cofactor evidence="1">
        <name>Zn(2+)</name>
        <dbReference type="ChEBI" id="CHEBI:29105"/>
    </cofactor>
    <text evidence="1">Binds 3 Zn(2+) ions per subunit.</text>
</comment>
<comment type="subunit">
    <text evidence="1">Homotrimer.</text>
</comment>
<comment type="similarity">
    <text evidence="1">Belongs to the PHP family.</text>
</comment>
<proteinExistence type="inferred from homology"/>
<organism>
    <name type="scientific">Salmonella typhimurium (strain LT2 / SGSC1412 / ATCC 700720)</name>
    <dbReference type="NCBI Taxonomy" id="99287"/>
    <lineage>
        <taxon>Bacteria</taxon>
        <taxon>Pseudomonadati</taxon>
        <taxon>Pseudomonadota</taxon>
        <taxon>Gammaproteobacteria</taxon>
        <taxon>Enterobacterales</taxon>
        <taxon>Enterobacteriaceae</taxon>
        <taxon>Salmonella</taxon>
    </lineage>
</organism>
<sequence length="245" mass="26906">MYPVDLHMHTVASTHAYSTLSDYIAEAKRKGIKLFAITDHGPDMEDAPHHWHFINMRIWPRLVDGVGILRGIEANIKNINGEIDCSGKMFDSLDLIIAGFHEPVFAPHDKETNTQAMIATIASGKVHIISHPGNPKYPVEVKAIAQAAAKHHVALEINNSSFLHSRKGSEDNCRAVAAAVRDAGGWVALGSDSHTAFTLGDFTECRKILDAVNFPEDRILNVSPQRLLAFLESRGMAPVPEFAEL</sequence>
<reference key="1">
    <citation type="journal article" date="2001" name="Nature">
        <title>Complete genome sequence of Salmonella enterica serovar Typhimurium LT2.</title>
        <authorList>
            <person name="McClelland M."/>
            <person name="Sanderson K.E."/>
            <person name="Spieth J."/>
            <person name="Clifton S.W."/>
            <person name="Latreille P."/>
            <person name="Courtney L."/>
            <person name="Porwollik S."/>
            <person name="Ali J."/>
            <person name="Dante M."/>
            <person name="Du F."/>
            <person name="Hou S."/>
            <person name="Layman D."/>
            <person name="Leonard S."/>
            <person name="Nguyen C."/>
            <person name="Scott K."/>
            <person name="Holmes A."/>
            <person name="Grewal N."/>
            <person name="Mulvaney E."/>
            <person name="Ryan E."/>
            <person name="Sun H."/>
            <person name="Florea L."/>
            <person name="Miller W."/>
            <person name="Stoneking T."/>
            <person name="Nhan M."/>
            <person name="Waterston R."/>
            <person name="Wilson R.K."/>
        </authorList>
    </citation>
    <scope>NUCLEOTIDE SEQUENCE [LARGE SCALE GENOMIC DNA]</scope>
    <source>
        <strain>LT2 / SGSC1412 / ATCC 700720</strain>
    </source>
</reference>
<accession>Q7CQR9</accession>
<protein>
    <recommendedName>
        <fullName evidence="1">Probable phosphatase YcdX</fullName>
        <ecNumber evidence="1">3.1.3.-</ecNumber>
    </recommendedName>
</protein>
<dbReference type="EC" id="3.1.3.-" evidence="1"/>
<dbReference type="EMBL" id="AE006468">
    <property type="protein sequence ID" value="AAL20066.1"/>
    <property type="molecule type" value="Genomic_DNA"/>
</dbReference>
<dbReference type="RefSeq" id="NP_460107.1">
    <property type="nucleotide sequence ID" value="NC_003197.2"/>
</dbReference>
<dbReference type="RefSeq" id="WP_000283643.1">
    <property type="nucleotide sequence ID" value="NC_003197.2"/>
</dbReference>
<dbReference type="SMR" id="Q7CQR9"/>
<dbReference type="STRING" id="99287.STM1136"/>
<dbReference type="PaxDb" id="99287-STM1136"/>
<dbReference type="GeneID" id="1252654"/>
<dbReference type="KEGG" id="stm:STM1136"/>
<dbReference type="PATRIC" id="fig|99287.12.peg.1203"/>
<dbReference type="HOGENOM" id="CLU_061999_0_1_6"/>
<dbReference type="OMA" id="SEPNCRA"/>
<dbReference type="PhylomeDB" id="Q7CQR9"/>
<dbReference type="BioCyc" id="SENT99287:STM1136-MONOMER"/>
<dbReference type="Proteomes" id="UP000001014">
    <property type="component" value="Chromosome"/>
</dbReference>
<dbReference type="GO" id="GO:0005829">
    <property type="term" value="C:cytosol"/>
    <property type="evidence" value="ECO:0000318"/>
    <property type="project" value="GO_Central"/>
</dbReference>
<dbReference type="GO" id="GO:0016791">
    <property type="term" value="F:phosphatase activity"/>
    <property type="evidence" value="ECO:0007669"/>
    <property type="project" value="UniProtKB-UniRule"/>
</dbReference>
<dbReference type="GO" id="GO:0042578">
    <property type="term" value="F:phosphoric ester hydrolase activity"/>
    <property type="evidence" value="ECO:0000318"/>
    <property type="project" value="GO_Central"/>
</dbReference>
<dbReference type="GO" id="GO:0008270">
    <property type="term" value="F:zinc ion binding"/>
    <property type="evidence" value="ECO:0000318"/>
    <property type="project" value="GO_Central"/>
</dbReference>
<dbReference type="GO" id="GO:0071978">
    <property type="term" value="P:bacterial-type flagellum-dependent swarming motility"/>
    <property type="evidence" value="ECO:0000318"/>
    <property type="project" value="GO_Central"/>
</dbReference>
<dbReference type="CDD" id="cd07437">
    <property type="entry name" value="PHP_HisPPase_Ycdx_like"/>
    <property type="match status" value="1"/>
</dbReference>
<dbReference type="FunFam" id="3.20.20.140:FF:000008">
    <property type="entry name" value="Probable phosphatase YcdX"/>
    <property type="match status" value="1"/>
</dbReference>
<dbReference type="Gene3D" id="3.20.20.140">
    <property type="entry name" value="Metal-dependent hydrolases"/>
    <property type="match status" value="1"/>
</dbReference>
<dbReference type="HAMAP" id="MF_01561">
    <property type="entry name" value="YcdX_phosphat"/>
    <property type="match status" value="1"/>
</dbReference>
<dbReference type="InterPro" id="IPR023710">
    <property type="entry name" value="Phosphatase_YcdX_put"/>
</dbReference>
<dbReference type="InterPro" id="IPR004013">
    <property type="entry name" value="PHP_dom"/>
</dbReference>
<dbReference type="InterPro" id="IPR050243">
    <property type="entry name" value="PHP_phosphatase"/>
</dbReference>
<dbReference type="InterPro" id="IPR003141">
    <property type="entry name" value="Pol/His_phosphatase_N"/>
</dbReference>
<dbReference type="InterPro" id="IPR016195">
    <property type="entry name" value="Pol/histidinol_Pase-like"/>
</dbReference>
<dbReference type="NCBIfam" id="NF006702">
    <property type="entry name" value="PRK09248.1"/>
    <property type="match status" value="1"/>
</dbReference>
<dbReference type="PANTHER" id="PTHR36928">
    <property type="entry name" value="PHOSPHATASE YCDX-RELATED"/>
    <property type="match status" value="1"/>
</dbReference>
<dbReference type="PANTHER" id="PTHR36928:SF1">
    <property type="entry name" value="PHOSPHATASE YCDX-RELATED"/>
    <property type="match status" value="1"/>
</dbReference>
<dbReference type="Pfam" id="PF02811">
    <property type="entry name" value="PHP"/>
    <property type="match status" value="1"/>
</dbReference>
<dbReference type="SMART" id="SM00481">
    <property type="entry name" value="POLIIIAc"/>
    <property type="match status" value="1"/>
</dbReference>
<dbReference type="SUPFAM" id="SSF89550">
    <property type="entry name" value="PHP domain-like"/>
    <property type="match status" value="1"/>
</dbReference>